<keyword id="KW-0001">2Fe-2S</keyword>
<keyword id="KW-0004">4Fe-4S</keyword>
<keyword id="KW-0093">Biotin biosynthesis</keyword>
<keyword id="KW-0408">Iron</keyword>
<keyword id="KW-0411">Iron-sulfur</keyword>
<keyword id="KW-0479">Metal-binding</keyword>
<keyword id="KW-0949">S-adenosyl-L-methionine</keyword>
<keyword id="KW-0808">Transferase</keyword>
<comment type="function">
    <text evidence="1">Catalyzes the conversion of dethiobiotin (DTB) to biotin by the insertion of a sulfur atom into dethiobiotin via a radical-based mechanism.</text>
</comment>
<comment type="catalytic activity">
    <reaction evidence="1">
        <text>(4R,5S)-dethiobiotin + (sulfur carrier)-SH + 2 reduced [2Fe-2S]-[ferredoxin] + 2 S-adenosyl-L-methionine = (sulfur carrier)-H + biotin + 2 5'-deoxyadenosine + 2 L-methionine + 2 oxidized [2Fe-2S]-[ferredoxin]</text>
        <dbReference type="Rhea" id="RHEA:22060"/>
        <dbReference type="Rhea" id="RHEA-COMP:10000"/>
        <dbReference type="Rhea" id="RHEA-COMP:10001"/>
        <dbReference type="Rhea" id="RHEA-COMP:14737"/>
        <dbReference type="Rhea" id="RHEA-COMP:14739"/>
        <dbReference type="ChEBI" id="CHEBI:17319"/>
        <dbReference type="ChEBI" id="CHEBI:29917"/>
        <dbReference type="ChEBI" id="CHEBI:33737"/>
        <dbReference type="ChEBI" id="CHEBI:33738"/>
        <dbReference type="ChEBI" id="CHEBI:57586"/>
        <dbReference type="ChEBI" id="CHEBI:57844"/>
        <dbReference type="ChEBI" id="CHEBI:59789"/>
        <dbReference type="ChEBI" id="CHEBI:64428"/>
        <dbReference type="ChEBI" id="CHEBI:149473"/>
        <dbReference type="EC" id="2.8.1.6"/>
    </reaction>
</comment>
<comment type="cofactor">
    <cofactor evidence="1">
        <name>[4Fe-4S] cluster</name>
        <dbReference type="ChEBI" id="CHEBI:49883"/>
    </cofactor>
    <text evidence="1">Binds 1 [4Fe-4S] cluster. The cluster is coordinated with 3 cysteines and an exchangeable S-adenosyl-L-methionine.</text>
</comment>
<comment type="cofactor">
    <cofactor evidence="1">
        <name>[2Fe-2S] cluster</name>
        <dbReference type="ChEBI" id="CHEBI:190135"/>
    </cofactor>
    <text evidence="1">Binds 1 [2Fe-2S] cluster. The cluster is coordinated with 3 cysteines and 1 arginine.</text>
</comment>
<comment type="pathway">
    <text evidence="1">Cofactor biosynthesis; biotin biosynthesis; biotin from 7,8-diaminononanoate: step 2/2.</text>
</comment>
<comment type="subunit">
    <text evidence="1">Homodimer.</text>
</comment>
<comment type="similarity">
    <text evidence="1">Belongs to the radical SAM superfamily. Biotin synthase family.</text>
</comment>
<comment type="sequence caution" evidence="3">
    <conflict type="erroneous initiation">
        <sequence resource="EMBL-CDS" id="ABY39488"/>
    </conflict>
</comment>
<feature type="chain" id="PRO_0000381254" description="Biotin synthase">
    <location>
        <begin position="1"/>
        <end position="328"/>
    </location>
</feature>
<feature type="domain" description="Radical SAM core" evidence="2">
    <location>
        <begin position="48"/>
        <end position="275"/>
    </location>
</feature>
<feature type="binding site" evidence="1">
    <location>
        <position position="63"/>
    </location>
    <ligand>
        <name>[4Fe-4S] cluster</name>
        <dbReference type="ChEBI" id="CHEBI:49883"/>
        <note>4Fe-4S-S-AdoMet</note>
    </ligand>
</feature>
<feature type="binding site" evidence="1">
    <location>
        <position position="67"/>
    </location>
    <ligand>
        <name>[4Fe-4S] cluster</name>
        <dbReference type="ChEBI" id="CHEBI:49883"/>
        <note>4Fe-4S-S-AdoMet</note>
    </ligand>
</feature>
<feature type="binding site" evidence="1">
    <location>
        <position position="70"/>
    </location>
    <ligand>
        <name>[4Fe-4S] cluster</name>
        <dbReference type="ChEBI" id="CHEBI:49883"/>
        <note>4Fe-4S-S-AdoMet</note>
    </ligand>
</feature>
<feature type="binding site" evidence="1">
    <location>
        <position position="107"/>
    </location>
    <ligand>
        <name>[2Fe-2S] cluster</name>
        <dbReference type="ChEBI" id="CHEBI:190135"/>
    </ligand>
</feature>
<feature type="binding site" evidence="1">
    <location>
        <position position="138"/>
    </location>
    <ligand>
        <name>[2Fe-2S] cluster</name>
        <dbReference type="ChEBI" id="CHEBI:190135"/>
    </ligand>
</feature>
<feature type="binding site" evidence="1">
    <location>
        <position position="198"/>
    </location>
    <ligand>
        <name>[2Fe-2S] cluster</name>
        <dbReference type="ChEBI" id="CHEBI:190135"/>
    </ligand>
</feature>
<feature type="binding site" evidence="1">
    <location>
        <position position="270"/>
    </location>
    <ligand>
        <name>[2Fe-2S] cluster</name>
        <dbReference type="ChEBI" id="CHEBI:190135"/>
    </ligand>
</feature>
<reference key="1">
    <citation type="submission" date="2007-12" db="EMBL/GenBank/DDBJ databases">
        <title>Brucella suis ATCC 23445 whole genome shotgun sequencing project.</title>
        <authorList>
            <person name="Setubal J.C."/>
            <person name="Bowns C."/>
            <person name="Boyle S."/>
            <person name="Crasta O.R."/>
            <person name="Czar M.J."/>
            <person name="Dharmanolla C."/>
            <person name="Gillespie J.J."/>
            <person name="Kenyon R.W."/>
            <person name="Lu J."/>
            <person name="Mane S."/>
            <person name="Mohapatra S."/>
            <person name="Nagrani S."/>
            <person name="Purkayastha A."/>
            <person name="Rajasimha H.K."/>
            <person name="Shallom J.M."/>
            <person name="Shallom S."/>
            <person name="Shukla M."/>
            <person name="Snyder E.E."/>
            <person name="Sobral B.W."/>
            <person name="Wattam A.R."/>
            <person name="Will R."/>
            <person name="Williams K."/>
            <person name="Yoo H."/>
            <person name="Bruce D."/>
            <person name="Detter C."/>
            <person name="Munk C."/>
            <person name="Brettin T.S."/>
        </authorList>
    </citation>
    <scope>NUCLEOTIDE SEQUENCE [LARGE SCALE GENOMIC DNA]</scope>
    <source>
        <strain>ATCC 23445 / NCTC 10510</strain>
    </source>
</reference>
<protein>
    <recommendedName>
        <fullName evidence="1">Biotin synthase</fullName>
        <ecNumber evidence="1">2.8.1.6</ecNumber>
    </recommendedName>
</protein>
<evidence type="ECO:0000255" key="1">
    <source>
        <dbReference type="HAMAP-Rule" id="MF_01694"/>
    </source>
</evidence>
<evidence type="ECO:0000255" key="2">
    <source>
        <dbReference type="PROSITE-ProRule" id="PRU01266"/>
    </source>
</evidence>
<evidence type="ECO:0000305" key="3"/>
<gene>
    <name evidence="1" type="primary">bioB</name>
    <name type="ordered locus">BSUIS_B0492</name>
</gene>
<organism>
    <name type="scientific">Brucella suis (strain ATCC 23445 / NCTC 10510)</name>
    <dbReference type="NCBI Taxonomy" id="470137"/>
    <lineage>
        <taxon>Bacteria</taxon>
        <taxon>Pseudomonadati</taxon>
        <taxon>Pseudomonadota</taxon>
        <taxon>Alphaproteobacteria</taxon>
        <taxon>Hyphomicrobiales</taxon>
        <taxon>Brucellaceae</taxon>
        <taxon>Brucella/Ochrobactrum group</taxon>
        <taxon>Brucella</taxon>
    </lineage>
</organism>
<accession>A9WYH2</accession>
<name>BIOB_BRUSI</name>
<proteinExistence type="inferred from homology"/>
<dbReference type="EC" id="2.8.1.6" evidence="1"/>
<dbReference type="EMBL" id="CP000912">
    <property type="protein sequence ID" value="ABY39488.1"/>
    <property type="status" value="ALT_INIT"/>
    <property type="molecule type" value="Genomic_DNA"/>
</dbReference>
<dbReference type="SMR" id="A9WYH2"/>
<dbReference type="KEGG" id="bmt:BSUIS_B0492"/>
<dbReference type="HOGENOM" id="CLU_033172_1_2_5"/>
<dbReference type="UniPathway" id="UPA00078">
    <property type="reaction ID" value="UER00162"/>
</dbReference>
<dbReference type="Proteomes" id="UP000008545">
    <property type="component" value="Chromosome II"/>
</dbReference>
<dbReference type="GO" id="GO:0051537">
    <property type="term" value="F:2 iron, 2 sulfur cluster binding"/>
    <property type="evidence" value="ECO:0007669"/>
    <property type="project" value="UniProtKB-KW"/>
</dbReference>
<dbReference type="GO" id="GO:0051539">
    <property type="term" value="F:4 iron, 4 sulfur cluster binding"/>
    <property type="evidence" value="ECO:0007669"/>
    <property type="project" value="UniProtKB-KW"/>
</dbReference>
<dbReference type="GO" id="GO:0004076">
    <property type="term" value="F:biotin synthase activity"/>
    <property type="evidence" value="ECO:0007669"/>
    <property type="project" value="UniProtKB-UniRule"/>
</dbReference>
<dbReference type="GO" id="GO:0005506">
    <property type="term" value="F:iron ion binding"/>
    <property type="evidence" value="ECO:0007669"/>
    <property type="project" value="UniProtKB-UniRule"/>
</dbReference>
<dbReference type="GO" id="GO:0009102">
    <property type="term" value="P:biotin biosynthetic process"/>
    <property type="evidence" value="ECO:0007669"/>
    <property type="project" value="UniProtKB-UniRule"/>
</dbReference>
<dbReference type="CDD" id="cd01335">
    <property type="entry name" value="Radical_SAM"/>
    <property type="match status" value="1"/>
</dbReference>
<dbReference type="Gene3D" id="3.20.20.70">
    <property type="entry name" value="Aldolase class I"/>
    <property type="match status" value="1"/>
</dbReference>
<dbReference type="HAMAP" id="MF_01694">
    <property type="entry name" value="BioB"/>
    <property type="match status" value="1"/>
</dbReference>
<dbReference type="InterPro" id="IPR013785">
    <property type="entry name" value="Aldolase_TIM"/>
</dbReference>
<dbReference type="InterPro" id="IPR010722">
    <property type="entry name" value="BATS_dom"/>
</dbReference>
<dbReference type="InterPro" id="IPR002684">
    <property type="entry name" value="Biotin_synth/BioAB"/>
</dbReference>
<dbReference type="InterPro" id="IPR024177">
    <property type="entry name" value="Biotin_synthase"/>
</dbReference>
<dbReference type="InterPro" id="IPR006638">
    <property type="entry name" value="Elp3/MiaA/NifB-like_rSAM"/>
</dbReference>
<dbReference type="InterPro" id="IPR007197">
    <property type="entry name" value="rSAM"/>
</dbReference>
<dbReference type="NCBIfam" id="TIGR00433">
    <property type="entry name" value="bioB"/>
    <property type="match status" value="1"/>
</dbReference>
<dbReference type="PANTHER" id="PTHR22976">
    <property type="entry name" value="BIOTIN SYNTHASE"/>
    <property type="match status" value="1"/>
</dbReference>
<dbReference type="PANTHER" id="PTHR22976:SF2">
    <property type="entry name" value="BIOTIN SYNTHASE, MITOCHONDRIAL"/>
    <property type="match status" value="1"/>
</dbReference>
<dbReference type="Pfam" id="PF06968">
    <property type="entry name" value="BATS"/>
    <property type="match status" value="1"/>
</dbReference>
<dbReference type="Pfam" id="PF04055">
    <property type="entry name" value="Radical_SAM"/>
    <property type="match status" value="1"/>
</dbReference>
<dbReference type="PIRSF" id="PIRSF001619">
    <property type="entry name" value="Biotin_synth"/>
    <property type="match status" value="1"/>
</dbReference>
<dbReference type="SFLD" id="SFLDF00272">
    <property type="entry name" value="biotin_synthase"/>
    <property type="match status" value="1"/>
</dbReference>
<dbReference type="SFLD" id="SFLDS00029">
    <property type="entry name" value="Radical_SAM"/>
    <property type="match status" value="1"/>
</dbReference>
<dbReference type="SMART" id="SM00876">
    <property type="entry name" value="BATS"/>
    <property type="match status" value="1"/>
</dbReference>
<dbReference type="SMART" id="SM00729">
    <property type="entry name" value="Elp3"/>
    <property type="match status" value="1"/>
</dbReference>
<dbReference type="SUPFAM" id="SSF102114">
    <property type="entry name" value="Radical SAM enzymes"/>
    <property type="match status" value="1"/>
</dbReference>
<dbReference type="PROSITE" id="PS51918">
    <property type="entry name" value="RADICAL_SAM"/>
    <property type="match status" value="1"/>
</dbReference>
<sequence length="328" mass="35653">MPDRGGENGASCSVGRWSAEEARAIYNLPFNDLLFRAHGLHRENFDPNRIQLSKLLNIKTGGCPEDCGYCSQSASAENGLKASKLMEIETVLEEARKAKAAGATRYCMGAAWRSPKDRDMPALTHMIESVKAMGLETCMTLGMLDSDKAEKLADAGLDYYNHNIDTSERFYPAVITTRSFEDRLDTLANVRNAGIKVCSGGILGLGEEAEDRIDMLVTLANLPEPPESVPINMLIPMPGTRLAKAAPVDPLEFVRVVALARILMPKSHVRLTAGRTAMSDEMQALCFFAGANSLFMGDTLLTAANPGDDRDSSLLRRLGIQAETEQPA</sequence>